<dbReference type="SMR" id="P82742"/>
<dbReference type="GO" id="GO:0005576">
    <property type="term" value="C:extracellular region"/>
    <property type="evidence" value="ECO:0007669"/>
    <property type="project" value="UniProtKB-SubCell"/>
</dbReference>
<dbReference type="GO" id="GO:0042742">
    <property type="term" value="P:defense response to bacterium"/>
    <property type="evidence" value="ECO:0007669"/>
    <property type="project" value="UniProtKB-KW"/>
</dbReference>
<dbReference type="InterPro" id="IPR012521">
    <property type="entry name" value="Antimicrobial_frog_2"/>
</dbReference>
<dbReference type="Pfam" id="PF08023">
    <property type="entry name" value="Antimicrobial_2"/>
    <property type="match status" value="1"/>
</dbReference>
<feature type="peptide" id="PRO_0000044656" description="Ranatuerin-2" evidence="1">
    <location>
        <begin position="1"/>
        <end position="31"/>
    </location>
</feature>
<feature type="disulfide bond" evidence="4">
    <location>
        <begin position="23"/>
        <end position="28"/>
    </location>
</feature>
<sequence>GLFLDTLKGAAKDVAGKLEGLKCKITGCKLP</sequence>
<proteinExistence type="evidence at protein level"/>
<keyword id="KW-0878">Amphibian defense peptide</keyword>
<keyword id="KW-0044">Antibiotic</keyword>
<keyword id="KW-0929">Antimicrobial</keyword>
<keyword id="KW-0903">Direct protein sequencing</keyword>
<keyword id="KW-1015">Disulfide bond</keyword>
<keyword id="KW-0964">Secreted</keyword>
<protein>
    <recommendedName>
        <fullName evidence="2">Ranatuerin-2</fullName>
    </recommendedName>
</protein>
<reference key="1">
    <citation type="journal article" date="1998" name="Biochem. Biophys. Res. Commun.">
        <title>Ranatuerins: antimicrobial peptides isolated from the skin of the American bullfrog, Rana catesbeiana.</title>
        <authorList>
            <person name="Goraya J."/>
            <person name="Knoop F.C."/>
            <person name="Conlon J.M."/>
        </authorList>
    </citation>
    <scope>PROTEIN SEQUENCE</scope>
    <scope>FUNCTION</scope>
    <scope>SUBCELLULAR LOCATION</scope>
    <source>
        <tissue>Skin secretion</tissue>
    </source>
</reference>
<name>RN2X2_AQUCT</name>
<comment type="function">
    <text evidence="1">Antibacterial activity against Gram-positive bacterium S.aureus (MIC=60 uM). Shows no detectable hemolytic activity towards human erythrocytes.</text>
</comment>
<comment type="subcellular location">
    <subcellularLocation>
        <location evidence="1">Secreted</location>
    </subcellularLocation>
</comment>
<comment type="tissue specificity">
    <text evidence="4">Expressed by the skin glands.</text>
</comment>
<comment type="similarity">
    <text evidence="3">Belongs to the frog skin active peptide (FSAP) family. Ranatuerin subfamily.</text>
</comment>
<evidence type="ECO:0000269" key="1">
    <source>
    </source>
</evidence>
<evidence type="ECO:0000303" key="2">
    <source>
    </source>
</evidence>
<evidence type="ECO:0000305" key="3"/>
<evidence type="ECO:0000305" key="4">
    <source>
    </source>
</evidence>
<organism>
    <name type="scientific">Aquarana catesbeiana</name>
    <name type="common">American bullfrog</name>
    <name type="synonym">Rana catesbeiana</name>
    <dbReference type="NCBI Taxonomy" id="8400"/>
    <lineage>
        <taxon>Eukaryota</taxon>
        <taxon>Metazoa</taxon>
        <taxon>Chordata</taxon>
        <taxon>Craniata</taxon>
        <taxon>Vertebrata</taxon>
        <taxon>Euteleostomi</taxon>
        <taxon>Amphibia</taxon>
        <taxon>Batrachia</taxon>
        <taxon>Anura</taxon>
        <taxon>Neobatrachia</taxon>
        <taxon>Ranoidea</taxon>
        <taxon>Ranidae</taxon>
        <taxon>Aquarana</taxon>
    </lineage>
</organism>
<accession>P82742</accession>